<organism>
    <name type="scientific">Escherichia coli O17:K52:H18 (strain UMN026 / ExPEC)</name>
    <dbReference type="NCBI Taxonomy" id="585056"/>
    <lineage>
        <taxon>Bacteria</taxon>
        <taxon>Pseudomonadati</taxon>
        <taxon>Pseudomonadota</taxon>
        <taxon>Gammaproteobacteria</taxon>
        <taxon>Enterobacterales</taxon>
        <taxon>Enterobacteriaceae</taxon>
        <taxon>Escherichia</taxon>
    </lineage>
</organism>
<reference key="1">
    <citation type="journal article" date="2009" name="PLoS Genet.">
        <title>Organised genome dynamics in the Escherichia coli species results in highly diverse adaptive paths.</title>
        <authorList>
            <person name="Touchon M."/>
            <person name="Hoede C."/>
            <person name="Tenaillon O."/>
            <person name="Barbe V."/>
            <person name="Baeriswyl S."/>
            <person name="Bidet P."/>
            <person name="Bingen E."/>
            <person name="Bonacorsi S."/>
            <person name="Bouchier C."/>
            <person name="Bouvet O."/>
            <person name="Calteau A."/>
            <person name="Chiapello H."/>
            <person name="Clermont O."/>
            <person name="Cruveiller S."/>
            <person name="Danchin A."/>
            <person name="Diard M."/>
            <person name="Dossat C."/>
            <person name="Karoui M.E."/>
            <person name="Frapy E."/>
            <person name="Garry L."/>
            <person name="Ghigo J.M."/>
            <person name="Gilles A.M."/>
            <person name="Johnson J."/>
            <person name="Le Bouguenec C."/>
            <person name="Lescat M."/>
            <person name="Mangenot S."/>
            <person name="Martinez-Jehanne V."/>
            <person name="Matic I."/>
            <person name="Nassif X."/>
            <person name="Oztas S."/>
            <person name="Petit M.A."/>
            <person name="Pichon C."/>
            <person name="Rouy Z."/>
            <person name="Ruf C.S."/>
            <person name="Schneider D."/>
            <person name="Tourret J."/>
            <person name="Vacherie B."/>
            <person name="Vallenet D."/>
            <person name="Medigue C."/>
            <person name="Rocha E.P.C."/>
            <person name="Denamur E."/>
        </authorList>
    </citation>
    <scope>NUCLEOTIDE SEQUENCE [LARGE SCALE GENOMIC DNA]</scope>
    <source>
        <strain>UMN026 / ExPEC</strain>
    </source>
</reference>
<feature type="chain" id="PRO_0000380007" description="Undecaprenyl phosphate-alpha-4-amino-4-deoxy-L-arabinose arabinosyl transferase">
    <location>
        <begin position="1"/>
        <end position="550"/>
    </location>
</feature>
<feature type="transmembrane region" description="Helical" evidence="1">
    <location>
        <begin position="7"/>
        <end position="27"/>
    </location>
</feature>
<feature type="transmembrane region" description="Helical" evidence="1">
    <location>
        <begin position="81"/>
        <end position="101"/>
    </location>
</feature>
<feature type="transmembrane region" description="Helical" evidence="1">
    <location>
        <begin position="113"/>
        <end position="133"/>
    </location>
</feature>
<feature type="transmembrane region" description="Helical" evidence="1">
    <location>
        <begin position="134"/>
        <end position="154"/>
    </location>
</feature>
<feature type="transmembrane region" description="Helical" evidence="1">
    <location>
        <begin position="165"/>
        <end position="185"/>
    </location>
</feature>
<feature type="transmembrane region" description="Helical" evidence="1">
    <location>
        <begin position="204"/>
        <end position="224"/>
    </location>
</feature>
<feature type="transmembrane region" description="Helical" evidence="1">
    <location>
        <begin position="263"/>
        <end position="283"/>
    </location>
</feature>
<feature type="transmembrane region" description="Helical" evidence="1">
    <location>
        <begin position="288"/>
        <end position="308"/>
    </location>
</feature>
<feature type="transmembrane region" description="Helical" evidence="1">
    <location>
        <begin position="315"/>
        <end position="335"/>
    </location>
</feature>
<feature type="transmembrane region" description="Helical" evidence="1">
    <location>
        <begin position="346"/>
        <end position="366"/>
    </location>
</feature>
<feature type="transmembrane region" description="Helical" evidence="1">
    <location>
        <begin position="382"/>
        <end position="402"/>
    </location>
</feature>
<feature type="transmembrane region" description="Helical" evidence="1">
    <location>
        <begin position="406"/>
        <end position="426"/>
    </location>
</feature>
<sequence length="550" mass="62515">MKSVRYLIGLFAFIACYYLLPISTRLLWQPDETRYAEISREMLASGDWIVPHLLGLRYFEKPIAGYWINSIGQWLFGANNFGVRAGVIFATLLTAALVTWFTLRLWRDKRLALLAAVIYLSLFIVYAIGTYAVLDPFIAFWLVAGMCSFWLAMQAQTWKGKSAGFLLLGITCGMGVMTKGFLALAVPVLSVLPWVATQKRWKDLFIYGWLAVISCVLTVLPWGLAIAQREPDFWHYFFWVEHIQRFAMDDAQHRAPFWYYLPVIIAGSLPWLGLLPGALYAGWKNRKHSATVYLLSWTIMPLLFFSVAKGKLPTYILSCFAPLAMLMAHYALLAAKNNPLALRINGWINIAFGVTGIIATFVVSPWGPMNTPVWQTFESYKVFCAWSIFSLWAFFGWYTLTNVEKTWSFAALCPLGLALLVGFSIPDRVMEGKHPQFFVEMTQESLQPSRYILTDSVGVAAGLAWSLQRDDIIMYRQTGELKYGLNYPDAKGRFVSGDEFANWLNQHRQEGIITLVLSVDRNEDINSLAIPPADAIDRQERLVLIQYRPK</sequence>
<proteinExistence type="inferred from homology"/>
<keyword id="KW-0997">Cell inner membrane</keyword>
<keyword id="KW-1003">Cell membrane</keyword>
<keyword id="KW-0328">Glycosyltransferase</keyword>
<keyword id="KW-0441">Lipid A biosynthesis</keyword>
<keyword id="KW-0444">Lipid biosynthesis</keyword>
<keyword id="KW-0443">Lipid metabolism</keyword>
<keyword id="KW-0448">Lipopolysaccharide biosynthesis</keyword>
<keyword id="KW-0472">Membrane</keyword>
<keyword id="KW-0808">Transferase</keyword>
<keyword id="KW-0812">Transmembrane</keyword>
<keyword id="KW-1133">Transmembrane helix</keyword>
<name>ARNT_ECOLU</name>
<accession>B7N5M2</accession>
<comment type="function">
    <text evidence="1">Catalyzes the transfer of the L-Ara4N moiety of the glycolipid undecaprenyl phosphate-alpha-L-Ara4N to lipid A. The modified arabinose is attached to lipid A and is required for resistance to polymyxin and cationic antimicrobial peptides.</text>
</comment>
<comment type="catalytic activity">
    <reaction evidence="1">
        <text>4-amino-4-deoxy-alpha-L-arabinopyranosyl di-trans,octa-cis-undecaprenyl phosphate + lipid IVA = lipid IIA + di-trans,octa-cis-undecaprenyl phosphate.</text>
        <dbReference type="EC" id="2.4.2.43"/>
    </reaction>
</comment>
<comment type="pathway">
    <text evidence="1">Lipopolysaccharide metabolism; 4-amino-4-deoxy-beta-L-arabinose-lipid A biosynthesis.</text>
</comment>
<comment type="subcellular location">
    <subcellularLocation>
        <location evidence="1">Cell inner membrane</location>
        <topology evidence="1">Multi-pass membrane protein</topology>
    </subcellularLocation>
</comment>
<comment type="similarity">
    <text evidence="1">Belongs to the glycosyltransferase 83 family.</text>
</comment>
<dbReference type="EC" id="2.4.2.43" evidence="1"/>
<dbReference type="EMBL" id="CU928163">
    <property type="protein sequence ID" value="CAR13781.1"/>
    <property type="molecule type" value="Genomic_DNA"/>
</dbReference>
<dbReference type="RefSeq" id="WP_000844019.1">
    <property type="nucleotide sequence ID" value="NC_011751.1"/>
</dbReference>
<dbReference type="RefSeq" id="YP_002413309.1">
    <property type="nucleotide sequence ID" value="NC_011751.1"/>
</dbReference>
<dbReference type="SMR" id="B7N5M2"/>
<dbReference type="STRING" id="585056.ECUMN_2599"/>
<dbReference type="CAZy" id="GT83">
    <property type="family name" value="Glycosyltransferase Family 83"/>
</dbReference>
<dbReference type="KEGG" id="eum:ECUMN_2599"/>
<dbReference type="PATRIC" id="fig|585056.7.peg.2779"/>
<dbReference type="HOGENOM" id="CLU_019200_2_1_6"/>
<dbReference type="UniPathway" id="UPA00037"/>
<dbReference type="Proteomes" id="UP000007097">
    <property type="component" value="Chromosome"/>
</dbReference>
<dbReference type="GO" id="GO:0005886">
    <property type="term" value="C:plasma membrane"/>
    <property type="evidence" value="ECO:0007669"/>
    <property type="project" value="UniProtKB-SubCell"/>
</dbReference>
<dbReference type="GO" id="GO:0103015">
    <property type="term" value="F:4-amino-4-deoxy-L-arabinose transferase activity"/>
    <property type="evidence" value="ECO:0007669"/>
    <property type="project" value="UniProtKB-EC"/>
</dbReference>
<dbReference type="GO" id="GO:0000030">
    <property type="term" value="F:mannosyltransferase activity"/>
    <property type="evidence" value="ECO:0007669"/>
    <property type="project" value="InterPro"/>
</dbReference>
<dbReference type="GO" id="GO:0009245">
    <property type="term" value="P:lipid A biosynthetic process"/>
    <property type="evidence" value="ECO:0007669"/>
    <property type="project" value="UniProtKB-UniRule"/>
</dbReference>
<dbReference type="GO" id="GO:0009103">
    <property type="term" value="P:lipopolysaccharide biosynthetic process"/>
    <property type="evidence" value="ECO:0007669"/>
    <property type="project" value="UniProtKB-KW"/>
</dbReference>
<dbReference type="GO" id="GO:0006493">
    <property type="term" value="P:protein O-linked glycosylation"/>
    <property type="evidence" value="ECO:0007669"/>
    <property type="project" value="InterPro"/>
</dbReference>
<dbReference type="GO" id="GO:0010041">
    <property type="term" value="P:response to iron(III) ion"/>
    <property type="evidence" value="ECO:0007669"/>
    <property type="project" value="TreeGrafter"/>
</dbReference>
<dbReference type="HAMAP" id="MF_01165">
    <property type="entry name" value="ArnT_transfer"/>
    <property type="match status" value="1"/>
</dbReference>
<dbReference type="InterPro" id="IPR022839">
    <property type="entry name" value="ArnT_tfrase"/>
</dbReference>
<dbReference type="InterPro" id="IPR003342">
    <property type="entry name" value="Glyco_trans_39/83"/>
</dbReference>
<dbReference type="InterPro" id="IPR050297">
    <property type="entry name" value="LipidA_mod_glycosyltrf_83"/>
</dbReference>
<dbReference type="NCBIfam" id="NF009784">
    <property type="entry name" value="PRK13279.1"/>
    <property type="match status" value="1"/>
</dbReference>
<dbReference type="PANTHER" id="PTHR33908">
    <property type="entry name" value="MANNOSYLTRANSFERASE YKCB-RELATED"/>
    <property type="match status" value="1"/>
</dbReference>
<dbReference type="PANTHER" id="PTHR33908:SF3">
    <property type="entry name" value="UNDECAPRENYL PHOSPHATE-ALPHA-4-AMINO-4-DEOXY-L-ARABINOSE ARABINOSYL TRANSFERASE"/>
    <property type="match status" value="1"/>
</dbReference>
<dbReference type="Pfam" id="PF02366">
    <property type="entry name" value="PMT"/>
    <property type="match status" value="1"/>
</dbReference>
<evidence type="ECO:0000255" key="1">
    <source>
        <dbReference type="HAMAP-Rule" id="MF_01165"/>
    </source>
</evidence>
<gene>
    <name evidence="1" type="primary">arnT</name>
    <name type="ordered locus">ECUMN_2599</name>
</gene>
<protein>
    <recommendedName>
        <fullName evidence="1">Undecaprenyl phosphate-alpha-4-amino-4-deoxy-L-arabinose arabinosyl transferase</fullName>
        <ecNumber evidence="1">2.4.2.43</ecNumber>
    </recommendedName>
    <alternativeName>
        <fullName evidence="1">4-amino-4-deoxy-L-arabinose lipid A transferase</fullName>
    </alternativeName>
    <alternativeName>
        <fullName evidence="1">Lipid IV(A) 4-amino-4-deoxy-L-arabinosyltransferase</fullName>
    </alternativeName>
    <alternativeName>
        <fullName evidence="1">Undecaprenyl phosphate-alpha-L-Ara4N transferase</fullName>
    </alternativeName>
</protein>